<keyword id="KW-0274">FAD</keyword>
<keyword id="KW-0285">Flavoprotein</keyword>
<keyword id="KW-0560">Oxidoreductase</keyword>
<keyword id="KW-1185">Reference proteome</keyword>
<keyword id="KW-0816">Tricarboxylic acid cycle</keyword>
<sequence>MIVVFRHESTIGHVFLTGGDYHSGAGGFSRAPSTAVTYVAPWLRTSQFPGGDRGLSGGGQRGRLWAYGPGYVEGIYVPPYQQAYTTELRTTCTCTPSRSRPGQVFTTCRSAIHPCAGPRVDSCVQHAGCVRQTTRGDKRKLNMSDSPKNAQKVTDEADVVLVGAGIMSATLGAMLRQLEPSWSQVIFERLDGAAQESSSPWNNAGTGHSALCELNYTPEKNGKIDISKAVNINEKFQVSRQFWAHQVEEGILPDPKEFINAVPHVSFGHGADQVAYIKNRYNALKDHPLFPGMQYADDEETFTEKLPLMAQGRDFSDPVAISWIQEGTDINYGSQSKQFLKAAEAGGTEIRYGHEVKDITKDGAKWKVTVKNVHTGDTQTIRANFVFVGAGGMALPLLQKSGIAEIRGFGGFPVSGQWLRCTNEELIEQHAAKVYGKASVGAPPMSVPHLDTRVIDGEKGLLFGPYAGWTPKFLKEGSNLDLFSSLRPTNLASLLGVGVQEMGLTKYLITEVVKDMEARMESLREYMPNAKKSDWELITAGQRVQVIKPVGAPRFGSLEFGTTLISNSEGTIAGLLGASPGASIAPAAMIELLERCFGKRMIEWGDKIQEMVPSYGKKLADEPEMFAELWEYTQKTLKLEKA</sequence>
<reference key="1">
    <citation type="journal article" date="2003" name="Genome Res.">
        <title>Comparative complete genome sequence analysis of the amino acid replacements responsible for the thermostability of Corynebacterium efficiens.</title>
        <authorList>
            <person name="Nishio Y."/>
            <person name="Nakamura Y."/>
            <person name="Kawarabayasi Y."/>
            <person name="Usuda Y."/>
            <person name="Kimura E."/>
            <person name="Sugimoto S."/>
            <person name="Matsui K."/>
            <person name="Yamagishi A."/>
            <person name="Kikuchi H."/>
            <person name="Ikeo K."/>
            <person name="Gojobori T."/>
        </authorList>
    </citation>
    <scope>NUCLEOTIDE SEQUENCE [LARGE SCALE GENOMIC DNA]</scope>
    <source>
        <strain>DSM 44549 / YS-314 / AJ 12310 / JCM 11189 / NBRC 100395</strain>
    </source>
</reference>
<accession>Q8FP91</accession>
<dbReference type="EC" id="1.1.5.4"/>
<dbReference type="EMBL" id="BA000035">
    <property type="protein sequence ID" value="BAC18704.1"/>
    <property type="molecule type" value="Genomic_DNA"/>
</dbReference>
<dbReference type="SMR" id="Q8FP91"/>
<dbReference type="STRING" id="196164.gene:10742322"/>
<dbReference type="KEGG" id="cef:CE1894"/>
<dbReference type="eggNOG" id="COG0579">
    <property type="taxonomic scope" value="Bacteria"/>
</dbReference>
<dbReference type="HOGENOM" id="CLU_028151_0_0_11"/>
<dbReference type="UniPathway" id="UPA00223">
    <property type="reaction ID" value="UER01008"/>
</dbReference>
<dbReference type="Proteomes" id="UP000001409">
    <property type="component" value="Chromosome"/>
</dbReference>
<dbReference type="GO" id="GO:0047545">
    <property type="term" value="F:2-hydroxyglutarate dehydrogenase activity"/>
    <property type="evidence" value="ECO:0007669"/>
    <property type="project" value="TreeGrafter"/>
</dbReference>
<dbReference type="GO" id="GO:0008924">
    <property type="term" value="F:L-malate dehydrogenase (quinone) activity"/>
    <property type="evidence" value="ECO:0007669"/>
    <property type="project" value="UniProtKB-UniRule"/>
</dbReference>
<dbReference type="GO" id="GO:0006099">
    <property type="term" value="P:tricarboxylic acid cycle"/>
    <property type="evidence" value="ECO:0007669"/>
    <property type="project" value="UniProtKB-UniRule"/>
</dbReference>
<dbReference type="Gene3D" id="3.30.9.10">
    <property type="entry name" value="D-Amino Acid Oxidase, subunit A, domain 2"/>
    <property type="match status" value="1"/>
</dbReference>
<dbReference type="Gene3D" id="3.50.50.60">
    <property type="entry name" value="FAD/NAD(P)-binding domain"/>
    <property type="match status" value="1"/>
</dbReference>
<dbReference type="HAMAP" id="MF_00212">
    <property type="entry name" value="MQO"/>
    <property type="match status" value="1"/>
</dbReference>
<dbReference type="InterPro" id="IPR036188">
    <property type="entry name" value="FAD/NAD-bd_sf"/>
</dbReference>
<dbReference type="InterPro" id="IPR006231">
    <property type="entry name" value="MQO"/>
</dbReference>
<dbReference type="NCBIfam" id="TIGR01320">
    <property type="entry name" value="mal_quin_oxido"/>
    <property type="match status" value="1"/>
</dbReference>
<dbReference type="NCBIfam" id="NF003603">
    <property type="entry name" value="PRK05257.1-1"/>
    <property type="match status" value="1"/>
</dbReference>
<dbReference type="NCBIfam" id="NF003606">
    <property type="entry name" value="PRK05257.2-1"/>
    <property type="match status" value="1"/>
</dbReference>
<dbReference type="NCBIfam" id="NF003611">
    <property type="entry name" value="PRK05257.3-2"/>
    <property type="match status" value="1"/>
</dbReference>
<dbReference type="NCBIfam" id="NF009875">
    <property type="entry name" value="PRK13339.1"/>
    <property type="match status" value="1"/>
</dbReference>
<dbReference type="PANTHER" id="PTHR43104">
    <property type="entry name" value="L-2-HYDROXYGLUTARATE DEHYDROGENASE, MITOCHONDRIAL"/>
    <property type="match status" value="1"/>
</dbReference>
<dbReference type="PANTHER" id="PTHR43104:SF2">
    <property type="entry name" value="L-2-HYDROXYGLUTARATE DEHYDROGENASE, MITOCHONDRIAL"/>
    <property type="match status" value="1"/>
</dbReference>
<dbReference type="Pfam" id="PF06039">
    <property type="entry name" value="Mqo"/>
    <property type="match status" value="1"/>
</dbReference>
<dbReference type="SUPFAM" id="SSF51905">
    <property type="entry name" value="FAD/NAD(P)-binding domain"/>
    <property type="match status" value="1"/>
</dbReference>
<gene>
    <name type="primary">mqo</name>
    <name type="ordered locus">CE1894</name>
</gene>
<name>MQO_COREF</name>
<protein>
    <recommendedName>
        <fullName>Probable malate:quinone oxidoreductase</fullName>
        <ecNumber>1.1.5.4</ecNumber>
    </recommendedName>
    <alternativeName>
        <fullName>MQO</fullName>
    </alternativeName>
    <alternativeName>
        <fullName>Malate dehydrogenase [quinone]</fullName>
    </alternativeName>
</protein>
<comment type="catalytic activity">
    <reaction>
        <text>(S)-malate + a quinone = a quinol + oxaloacetate</text>
        <dbReference type="Rhea" id="RHEA:46012"/>
        <dbReference type="ChEBI" id="CHEBI:15589"/>
        <dbReference type="ChEBI" id="CHEBI:16452"/>
        <dbReference type="ChEBI" id="CHEBI:24646"/>
        <dbReference type="ChEBI" id="CHEBI:132124"/>
        <dbReference type="EC" id="1.1.5.4"/>
    </reaction>
</comment>
<comment type="cofactor">
    <cofactor evidence="1">
        <name>FAD</name>
        <dbReference type="ChEBI" id="CHEBI:57692"/>
    </cofactor>
</comment>
<comment type="pathway">
    <text>Carbohydrate metabolism; tricarboxylic acid cycle; oxaloacetate from (S)-malate (quinone route): step 1/1.</text>
</comment>
<comment type="similarity">
    <text evidence="2">In the C-terminal section; belongs to the MQO family.</text>
</comment>
<feature type="chain" id="PRO_0000128710" description="Probable malate:quinone oxidoreductase">
    <location>
        <begin position="1"/>
        <end position="642"/>
    </location>
</feature>
<feature type="region of interest" description="Unknown">
    <location>
        <begin position="1"/>
        <end position="142"/>
    </location>
</feature>
<feature type="region of interest" description="MQO domain">
    <location>
        <begin position="143"/>
        <end position="642"/>
    </location>
</feature>
<organism>
    <name type="scientific">Corynebacterium efficiens (strain DSM 44549 / YS-314 / AJ 12310 / JCM 11189 / NBRC 100395)</name>
    <dbReference type="NCBI Taxonomy" id="196164"/>
    <lineage>
        <taxon>Bacteria</taxon>
        <taxon>Bacillati</taxon>
        <taxon>Actinomycetota</taxon>
        <taxon>Actinomycetes</taxon>
        <taxon>Mycobacteriales</taxon>
        <taxon>Corynebacteriaceae</taxon>
        <taxon>Corynebacterium</taxon>
    </lineage>
</organism>
<evidence type="ECO:0000250" key="1"/>
<evidence type="ECO:0000305" key="2"/>
<proteinExistence type="inferred from homology"/>